<comment type="function">
    <text evidence="1">Specifically dimethylates two adjacent adenosines (A1518 and A1519) in the loop of a conserved hairpin near the 3'-end of 16S rRNA in the 30S particle. May play a critical role in biogenesis of 30S subunits.</text>
</comment>
<comment type="catalytic activity">
    <reaction evidence="1">
        <text>adenosine(1518)/adenosine(1519) in 16S rRNA + 4 S-adenosyl-L-methionine = N(6)-dimethyladenosine(1518)/N(6)-dimethyladenosine(1519) in 16S rRNA + 4 S-adenosyl-L-homocysteine + 4 H(+)</text>
        <dbReference type="Rhea" id="RHEA:19609"/>
        <dbReference type="Rhea" id="RHEA-COMP:10232"/>
        <dbReference type="Rhea" id="RHEA-COMP:10233"/>
        <dbReference type="ChEBI" id="CHEBI:15378"/>
        <dbReference type="ChEBI" id="CHEBI:57856"/>
        <dbReference type="ChEBI" id="CHEBI:59789"/>
        <dbReference type="ChEBI" id="CHEBI:74411"/>
        <dbReference type="ChEBI" id="CHEBI:74493"/>
        <dbReference type="EC" id="2.1.1.182"/>
    </reaction>
</comment>
<comment type="subcellular location">
    <subcellularLocation>
        <location evidence="1">Cytoplasm</location>
    </subcellularLocation>
</comment>
<comment type="similarity">
    <text evidence="1">Belongs to the class I-like SAM-binding methyltransferase superfamily. rRNA adenine N(6)-methyltransferase family. RsmA subfamily.</text>
</comment>
<organism>
    <name type="scientific">Neisseria meningitidis serogroup B (strain ATCC BAA-335 / MC58)</name>
    <dbReference type="NCBI Taxonomy" id="122586"/>
    <lineage>
        <taxon>Bacteria</taxon>
        <taxon>Pseudomonadati</taxon>
        <taxon>Pseudomonadota</taxon>
        <taxon>Betaproteobacteria</taxon>
        <taxon>Neisseriales</taxon>
        <taxon>Neisseriaceae</taxon>
        <taxon>Neisseria</taxon>
    </lineage>
</organism>
<name>RSMA_NEIMB</name>
<feature type="chain" id="PRO_0000101572" description="Ribosomal RNA small subunit methyltransferase A">
    <location>
        <begin position="1"/>
        <end position="259"/>
    </location>
</feature>
<feature type="binding site" evidence="1">
    <location>
        <position position="13"/>
    </location>
    <ligand>
        <name>S-adenosyl-L-methionine</name>
        <dbReference type="ChEBI" id="CHEBI:59789"/>
    </ligand>
</feature>
<feature type="binding site" evidence="1">
    <location>
        <position position="15"/>
    </location>
    <ligand>
        <name>S-adenosyl-L-methionine</name>
        <dbReference type="ChEBI" id="CHEBI:59789"/>
    </ligand>
</feature>
<feature type="binding site" evidence="1">
    <location>
        <position position="40"/>
    </location>
    <ligand>
        <name>S-adenosyl-L-methionine</name>
        <dbReference type="ChEBI" id="CHEBI:59789"/>
    </ligand>
</feature>
<feature type="binding site" evidence="1">
    <location>
        <position position="61"/>
    </location>
    <ligand>
        <name>S-adenosyl-L-methionine</name>
        <dbReference type="ChEBI" id="CHEBI:59789"/>
    </ligand>
</feature>
<feature type="binding site" evidence="1">
    <location>
        <position position="85"/>
    </location>
    <ligand>
        <name>S-adenosyl-L-methionine</name>
        <dbReference type="ChEBI" id="CHEBI:59789"/>
    </ligand>
</feature>
<feature type="binding site" evidence="1">
    <location>
        <position position="103"/>
    </location>
    <ligand>
        <name>S-adenosyl-L-methionine</name>
        <dbReference type="ChEBI" id="CHEBI:59789"/>
    </ligand>
</feature>
<keyword id="KW-0963">Cytoplasm</keyword>
<keyword id="KW-0489">Methyltransferase</keyword>
<keyword id="KW-1185">Reference proteome</keyword>
<keyword id="KW-0694">RNA-binding</keyword>
<keyword id="KW-0698">rRNA processing</keyword>
<keyword id="KW-0949">S-adenosyl-L-methionine</keyword>
<keyword id="KW-0808">Transferase</keyword>
<evidence type="ECO:0000255" key="1">
    <source>
        <dbReference type="HAMAP-Rule" id="MF_00607"/>
    </source>
</evidence>
<accession>Q9K0B7</accession>
<gene>
    <name evidence="1" type="primary">rsmA</name>
    <name evidence="1" type="synonym">ksgA</name>
    <name type="ordered locus">NMB0697</name>
</gene>
<protein>
    <recommendedName>
        <fullName evidence="1">Ribosomal RNA small subunit methyltransferase A</fullName>
        <ecNumber evidence="1">2.1.1.182</ecNumber>
    </recommendedName>
    <alternativeName>
        <fullName evidence="1">16S rRNA (adenine(1518)-N(6)/adenine(1519)-N(6))-dimethyltransferase</fullName>
    </alternativeName>
    <alternativeName>
        <fullName evidence="1">16S rRNA dimethyladenosine transferase</fullName>
    </alternativeName>
    <alternativeName>
        <fullName evidence="1">16S rRNA dimethylase</fullName>
    </alternativeName>
    <alternativeName>
        <fullName evidence="1">S-adenosylmethionine-6-N', N'-adenosyl(rRNA) dimethyltransferase</fullName>
    </alternativeName>
</protein>
<proteinExistence type="inferred from homology"/>
<reference key="1">
    <citation type="journal article" date="2000" name="Science">
        <title>Complete genome sequence of Neisseria meningitidis serogroup B strain MC58.</title>
        <authorList>
            <person name="Tettelin H."/>
            <person name="Saunders N.J."/>
            <person name="Heidelberg J.F."/>
            <person name="Jeffries A.C."/>
            <person name="Nelson K.E."/>
            <person name="Eisen J.A."/>
            <person name="Ketchum K.A."/>
            <person name="Hood D.W."/>
            <person name="Peden J.F."/>
            <person name="Dodson R.J."/>
            <person name="Nelson W.C."/>
            <person name="Gwinn M.L."/>
            <person name="DeBoy R.T."/>
            <person name="Peterson J.D."/>
            <person name="Hickey E.K."/>
            <person name="Haft D.H."/>
            <person name="Salzberg S.L."/>
            <person name="White O."/>
            <person name="Fleischmann R.D."/>
            <person name="Dougherty B.A."/>
            <person name="Mason T.M."/>
            <person name="Ciecko A."/>
            <person name="Parksey D.S."/>
            <person name="Blair E."/>
            <person name="Cittone H."/>
            <person name="Clark E.B."/>
            <person name="Cotton M.D."/>
            <person name="Utterback T.R."/>
            <person name="Khouri H.M."/>
            <person name="Qin H."/>
            <person name="Vamathevan J.J."/>
            <person name="Gill J."/>
            <person name="Scarlato V."/>
            <person name="Masignani V."/>
            <person name="Pizza M."/>
            <person name="Grandi G."/>
            <person name="Sun L."/>
            <person name="Smith H.O."/>
            <person name="Fraser C.M."/>
            <person name="Moxon E.R."/>
            <person name="Rappuoli R."/>
            <person name="Venter J.C."/>
        </authorList>
    </citation>
    <scope>NUCLEOTIDE SEQUENCE [LARGE SCALE GENOMIC DNA]</scope>
    <source>
        <strain>ATCC BAA-335 / MC58</strain>
    </source>
</reference>
<sequence>MKEHKARKRFGQNFLQDTRIISDIVNAVRPQADDVVIEIGPGLAAITEPLAKKLNRLHVVEIDRDIVCRLKTLPFADKLVIHEGDVLQFDFNGIAGKKKIVGNLPYNISTPLLFKLAEVADDVVDMHFMLQKEVVERMVAAPKSNDYGRLGVMLQYFFDMEMLIDVPPESFDPAPKVDSAVVRMIPVKHRIGKADDFEHFAKLVKLAFHQRRKTIRNNLKELAGDDDLQAVGINPQDRAEHIAPEKYVALSNYLAGKVV</sequence>
<dbReference type="EC" id="2.1.1.182" evidence="1"/>
<dbReference type="EMBL" id="AE002098">
    <property type="protein sequence ID" value="AAF41114.1"/>
    <property type="molecule type" value="Genomic_DNA"/>
</dbReference>
<dbReference type="PIR" id="H81168">
    <property type="entry name" value="H81168"/>
</dbReference>
<dbReference type="RefSeq" id="NP_273739.1">
    <property type="nucleotide sequence ID" value="NC_003112.2"/>
</dbReference>
<dbReference type="RefSeq" id="WP_002225484.1">
    <property type="nucleotide sequence ID" value="NC_003112.2"/>
</dbReference>
<dbReference type="SMR" id="Q9K0B7"/>
<dbReference type="FunCoup" id="Q9K0B7">
    <property type="interactions" value="462"/>
</dbReference>
<dbReference type="STRING" id="122586.NMB0697"/>
<dbReference type="PaxDb" id="122586-NMB0697"/>
<dbReference type="KEGG" id="nme:NMB0697"/>
<dbReference type="PATRIC" id="fig|122586.8.peg.884"/>
<dbReference type="HOGENOM" id="CLU_041220_0_1_4"/>
<dbReference type="InParanoid" id="Q9K0B7"/>
<dbReference type="OrthoDB" id="9814755at2"/>
<dbReference type="Proteomes" id="UP000000425">
    <property type="component" value="Chromosome"/>
</dbReference>
<dbReference type="GO" id="GO:0005829">
    <property type="term" value="C:cytosol"/>
    <property type="evidence" value="ECO:0000318"/>
    <property type="project" value="GO_Central"/>
</dbReference>
<dbReference type="GO" id="GO:0052908">
    <property type="term" value="F:16S rRNA (adenine(1518)-N(6)/adenine(1519)-N(6))-dimethyltransferase activity"/>
    <property type="evidence" value="ECO:0007669"/>
    <property type="project" value="UniProtKB-EC"/>
</dbReference>
<dbReference type="GO" id="GO:0003723">
    <property type="term" value="F:RNA binding"/>
    <property type="evidence" value="ECO:0007669"/>
    <property type="project" value="UniProtKB-KW"/>
</dbReference>
<dbReference type="GO" id="GO:0000179">
    <property type="term" value="F:rRNA (adenine-N6,N6-)-dimethyltransferase activity"/>
    <property type="evidence" value="ECO:0000318"/>
    <property type="project" value="GO_Central"/>
</dbReference>
<dbReference type="GO" id="GO:0031167">
    <property type="term" value="P:rRNA methylation"/>
    <property type="evidence" value="ECO:0000318"/>
    <property type="project" value="GO_Central"/>
</dbReference>
<dbReference type="FunFam" id="1.10.8.100:FF:000001">
    <property type="entry name" value="Ribosomal RNA small subunit methyltransferase A"/>
    <property type="match status" value="1"/>
</dbReference>
<dbReference type="FunFam" id="3.40.50.150:FF:000006">
    <property type="entry name" value="Ribosomal RNA small subunit methyltransferase A"/>
    <property type="match status" value="1"/>
</dbReference>
<dbReference type="Gene3D" id="1.10.8.100">
    <property type="entry name" value="Ribosomal RNA adenine dimethylase-like, domain 2"/>
    <property type="match status" value="1"/>
</dbReference>
<dbReference type="Gene3D" id="3.40.50.150">
    <property type="entry name" value="Vaccinia Virus protein VP39"/>
    <property type="match status" value="1"/>
</dbReference>
<dbReference type="HAMAP" id="MF_00607">
    <property type="entry name" value="16SrRNA_methyltr_A"/>
    <property type="match status" value="1"/>
</dbReference>
<dbReference type="InterPro" id="IPR001737">
    <property type="entry name" value="KsgA/Erm"/>
</dbReference>
<dbReference type="InterPro" id="IPR023165">
    <property type="entry name" value="rRNA_Ade_diMease-like_C"/>
</dbReference>
<dbReference type="InterPro" id="IPR020596">
    <property type="entry name" value="rRNA_Ade_Mease_Trfase_CS"/>
</dbReference>
<dbReference type="InterPro" id="IPR020598">
    <property type="entry name" value="rRNA_Ade_methylase_Trfase_N"/>
</dbReference>
<dbReference type="InterPro" id="IPR011530">
    <property type="entry name" value="rRNA_adenine_dimethylase"/>
</dbReference>
<dbReference type="InterPro" id="IPR029063">
    <property type="entry name" value="SAM-dependent_MTases_sf"/>
</dbReference>
<dbReference type="NCBIfam" id="TIGR00755">
    <property type="entry name" value="ksgA"/>
    <property type="match status" value="1"/>
</dbReference>
<dbReference type="PANTHER" id="PTHR11727">
    <property type="entry name" value="DIMETHYLADENOSINE TRANSFERASE"/>
    <property type="match status" value="1"/>
</dbReference>
<dbReference type="PANTHER" id="PTHR11727:SF7">
    <property type="entry name" value="DIMETHYLADENOSINE TRANSFERASE-RELATED"/>
    <property type="match status" value="1"/>
</dbReference>
<dbReference type="Pfam" id="PF00398">
    <property type="entry name" value="RrnaAD"/>
    <property type="match status" value="1"/>
</dbReference>
<dbReference type="SMART" id="SM00650">
    <property type="entry name" value="rADc"/>
    <property type="match status" value="1"/>
</dbReference>
<dbReference type="SUPFAM" id="SSF53335">
    <property type="entry name" value="S-adenosyl-L-methionine-dependent methyltransferases"/>
    <property type="match status" value="1"/>
</dbReference>
<dbReference type="PROSITE" id="PS01131">
    <property type="entry name" value="RRNA_A_DIMETH"/>
    <property type="match status" value="1"/>
</dbReference>
<dbReference type="PROSITE" id="PS51689">
    <property type="entry name" value="SAM_RNA_A_N6_MT"/>
    <property type="match status" value="1"/>
</dbReference>